<evidence type="ECO:0000255" key="1">
    <source>
        <dbReference type="HAMAP-Rule" id="MF_02013"/>
    </source>
</evidence>
<sequence length="86" mass="10025">MSQEDKQRITVEIYNRKYHIVGEESERHMQLVADLVDQKMNEIHEVNKQLDTSSLAVLTAVNTMNDYLKLKEDYATLLGSIKKKED</sequence>
<feature type="chain" id="PRO_0000345691" description="Cell division protein ZapA">
    <location>
        <begin position="1"/>
        <end position="86"/>
    </location>
</feature>
<dbReference type="EMBL" id="BA000028">
    <property type="protein sequence ID" value="BAC14083.1"/>
    <property type="molecule type" value="Genomic_DNA"/>
</dbReference>
<dbReference type="RefSeq" id="WP_011066521.1">
    <property type="nucleotide sequence ID" value="NC_004193.1"/>
</dbReference>
<dbReference type="SMR" id="Q8EPH8"/>
<dbReference type="STRING" id="221109.gene:10734375"/>
<dbReference type="KEGG" id="oih:OB2127"/>
<dbReference type="eggNOG" id="COG3027">
    <property type="taxonomic scope" value="Bacteria"/>
</dbReference>
<dbReference type="HOGENOM" id="CLU_116623_4_0_9"/>
<dbReference type="OrthoDB" id="9808604at2"/>
<dbReference type="PhylomeDB" id="Q8EPH8"/>
<dbReference type="Proteomes" id="UP000000822">
    <property type="component" value="Chromosome"/>
</dbReference>
<dbReference type="GO" id="GO:0032153">
    <property type="term" value="C:cell division site"/>
    <property type="evidence" value="ECO:0007669"/>
    <property type="project" value="TreeGrafter"/>
</dbReference>
<dbReference type="GO" id="GO:0030428">
    <property type="term" value="C:cell septum"/>
    <property type="evidence" value="ECO:0007669"/>
    <property type="project" value="TreeGrafter"/>
</dbReference>
<dbReference type="GO" id="GO:0005829">
    <property type="term" value="C:cytosol"/>
    <property type="evidence" value="ECO:0007669"/>
    <property type="project" value="TreeGrafter"/>
</dbReference>
<dbReference type="GO" id="GO:0005886">
    <property type="term" value="C:plasma membrane"/>
    <property type="evidence" value="ECO:0007669"/>
    <property type="project" value="UniProtKB-UniRule"/>
</dbReference>
<dbReference type="GO" id="GO:0000917">
    <property type="term" value="P:division septum assembly"/>
    <property type="evidence" value="ECO:0007669"/>
    <property type="project" value="UniProtKB-KW"/>
</dbReference>
<dbReference type="GO" id="GO:0043093">
    <property type="term" value="P:FtsZ-dependent cytokinesis"/>
    <property type="evidence" value="ECO:0007669"/>
    <property type="project" value="TreeGrafter"/>
</dbReference>
<dbReference type="GO" id="GO:0000921">
    <property type="term" value="P:septin ring assembly"/>
    <property type="evidence" value="ECO:0007669"/>
    <property type="project" value="TreeGrafter"/>
</dbReference>
<dbReference type="Gene3D" id="6.10.250.790">
    <property type="match status" value="1"/>
</dbReference>
<dbReference type="HAMAP" id="MF_02013">
    <property type="entry name" value="ZapA_type2"/>
    <property type="match status" value="1"/>
</dbReference>
<dbReference type="InterPro" id="IPR053712">
    <property type="entry name" value="Bac_CellDiv_Activator"/>
</dbReference>
<dbReference type="InterPro" id="IPR007838">
    <property type="entry name" value="Cell_div_ZapA-like"/>
</dbReference>
<dbReference type="InterPro" id="IPR036192">
    <property type="entry name" value="Cell_div_ZapA-like_sf"/>
</dbReference>
<dbReference type="InterPro" id="IPR023688">
    <property type="entry name" value="Cell_div_ZapA_firmicutes"/>
</dbReference>
<dbReference type="NCBIfam" id="NF010724">
    <property type="entry name" value="PRK14126.1"/>
    <property type="match status" value="1"/>
</dbReference>
<dbReference type="PANTHER" id="PTHR34981">
    <property type="entry name" value="CELL DIVISION PROTEIN ZAPA"/>
    <property type="match status" value="1"/>
</dbReference>
<dbReference type="PANTHER" id="PTHR34981:SF1">
    <property type="entry name" value="CELL DIVISION PROTEIN ZAPA"/>
    <property type="match status" value="1"/>
</dbReference>
<dbReference type="Pfam" id="PF05164">
    <property type="entry name" value="ZapA"/>
    <property type="match status" value="1"/>
</dbReference>
<dbReference type="SUPFAM" id="SSF102829">
    <property type="entry name" value="Cell division protein ZapA-like"/>
    <property type="match status" value="1"/>
</dbReference>
<reference key="1">
    <citation type="journal article" date="2002" name="Nucleic Acids Res.">
        <title>Genome sequence of Oceanobacillus iheyensis isolated from the Iheya Ridge and its unexpected adaptive capabilities to extreme environments.</title>
        <authorList>
            <person name="Takami H."/>
            <person name="Takaki Y."/>
            <person name="Uchiyama I."/>
        </authorList>
    </citation>
    <scope>NUCLEOTIDE SEQUENCE [LARGE SCALE GENOMIC DNA]</scope>
    <source>
        <strain>DSM 14371 / CIP 107618 / JCM 11309 / KCTC 3954 / HTE831</strain>
    </source>
</reference>
<proteinExistence type="inferred from homology"/>
<protein>
    <recommendedName>
        <fullName evidence="1">Cell division protein ZapA</fullName>
    </recommendedName>
    <alternativeName>
        <fullName evidence="1">Z ring-associated protein ZapA</fullName>
    </alternativeName>
</protein>
<accession>Q8EPH8</accession>
<organism>
    <name type="scientific">Oceanobacillus iheyensis (strain DSM 14371 / CIP 107618 / JCM 11309 / KCTC 3954 / HTE831)</name>
    <dbReference type="NCBI Taxonomy" id="221109"/>
    <lineage>
        <taxon>Bacteria</taxon>
        <taxon>Bacillati</taxon>
        <taxon>Bacillota</taxon>
        <taxon>Bacilli</taxon>
        <taxon>Bacillales</taxon>
        <taxon>Bacillaceae</taxon>
        <taxon>Oceanobacillus</taxon>
    </lineage>
</organism>
<keyword id="KW-0131">Cell cycle</keyword>
<keyword id="KW-0132">Cell division</keyword>
<keyword id="KW-0963">Cytoplasm</keyword>
<keyword id="KW-1185">Reference proteome</keyword>
<keyword id="KW-0717">Septation</keyword>
<comment type="function">
    <text evidence="1">Activator of cell division through the inhibition of FtsZ GTPase activity, therefore promoting FtsZ assembly into bundles of protofilaments necessary for the formation of the division Z ring. It is recruited early at mid-cell but it is not essential for cell division.</text>
</comment>
<comment type="subunit">
    <text evidence="1">Homodimer. Interacts with FtsZ.</text>
</comment>
<comment type="subcellular location">
    <subcellularLocation>
        <location evidence="1">Cytoplasm</location>
    </subcellularLocation>
    <text evidence="1">Localizes at mid-cell. In sporulating cells, localizes near the cell poles.</text>
</comment>
<comment type="similarity">
    <text evidence="1">Belongs to the ZapA family. Type 2 subfamily.</text>
</comment>
<gene>
    <name evidence="1" type="primary">zapA</name>
    <name type="ordered locus">OB2127</name>
</gene>
<name>ZAPA_OCEIH</name>